<gene>
    <name evidence="1" type="primary">proA</name>
    <name type="ordered locus">CGSHiEE_03940</name>
</gene>
<keyword id="KW-0028">Amino-acid biosynthesis</keyword>
<keyword id="KW-0963">Cytoplasm</keyword>
<keyword id="KW-0521">NADP</keyword>
<keyword id="KW-0560">Oxidoreductase</keyword>
<keyword id="KW-0641">Proline biosynthesis</keyword>
<organism>
    <name type="scientific">Haemophilus influenzae (strain PittEE)</name>
    <dbReference type="NCBI Taxonomy" id="374930"/>
    <lineage>
        <taxon>Bacteria</taxon>
        <taxon>Pseudomonadati</taxon>
        <taxon>Pseudomonadota</taxon>
        <taxon>Gammaproteobacteria</taxon>
        <taxon>Pasteurellales</taxon>
        <taxon>Pasteurellaceae</taxon>
        <taxon>Haemophilus</taxon>
    </lineage>
</organism>
<feature type="chain" id="PRO_1000049952" description="Gamma-glutamyl phosphate reductase">
    <location>
        <begin position="1"/>
        <end position="417"/>
    </location>
</feature>
<dbReference type="EC" id="1.2.1.41" evidence="1"/>
<dbReference type="EMBL" id="CP000671">
    <property type="protein sequence ID" value="ABQ98203.1"/>
    <property type="molecule type" value="Genomic_DNA"/>
</dbReference>
<dbReference type="SMR" id="A5UBQ2"/>
<dbReference type="KEGG" id="hip:CGSHiEE_03940"/>
<dbReference type="HOGENOM" id="CLU_030231_0_0_6"/>
<dbReference type="UniPathway" id="UPA00098">
    <property type="reaction ID" value="UER00360"/>
</dbReference>
<dbReference type="GO" id="GO:0005737">
    <property type="term" value="C:cytoplasm"/>
    <property type="evidence" value="ECO:0007669"/>
    <property type="project" value="UniProtKB-SubCell"/>
</dbReference>
<dbReference type="GO" id="GO:0004350">
    <property type="term" value="F:glutamate-5-semialdehyde dehydrogenase activity"/>
    <property type="evidence" value="ECO:0007669"/>
    <property type="project" value="UniProtKB-UniRule"/>
</dbReference>
<dbReference type="GO" id="GO:0050661">
    <property type="term" value="F:NADP binding"/>
    <property type="evidence" value="ECO:0007669"/>
    <property type="project" value="InterPro"/>
</dbReference>
<dbReference type="GO" id="GO:0055129">
    <property type="term" value="P:L-proline biosynthetic process"/>
    <property type="evidence" value="ECO:0007669"/>
    <property type="project" value="UniProtKB-UniRule"/>
</dbReference>
<dbReference type="CDD" id="cd07079">
    <property type="entry name" value="ALDH_F18-19_ProA-GPR"/>
    <property type="match status" value="1"/>
</dbReference>
<dbReference type="FunFam" id="3.40.309.10:FF:000028">
    <property type="entry name" value="Gamma-glutamyl phosphate reductase"/>
    <property type="match status" value="1"/>
</dbReference>
<dbReference type="Gene3D" id="3.40.605.10">
    <property type="entry name" value="Aldehyde Dehydrogenase, Chain A, domain 1"/>
    <property type="match status" value="1"/>
</dbReference>
<dbReference type="Gene3D" id="3.40.309.10">
    <property type="entry name" value="Aldehyde Dehydrogenase, Chain A, domain 2"/>
    <property type="match status" value="1"/>
</dbReference>
<dbReference type="HAMAP" id="MF_00412">
    <property type="entry name" value="ProA"/>
    <property type="match status" value="1"/>
</dbReference>
<dbReference type="InterPro" id="IPR016161">
    <property type="entry name" value="Ald_DH/histidinol_DH"/>
</dbReference>
<dbReference type="InterPro" id="IPR016163">
    <property type="entry name" value="Ald_DH_C"/>
</dbReference>
<dbReference type="InterPro" id="IPR016162">
    <property type="entry name" value="Ald_DH_N"/>
</dbReference>
<dbReference type="InterPro" id="IPR015590">
    <property type="entry name" value="Aldehyde_DH_dom"/>
</dbReference>
<dbReference type="InterPro" id="IPR020593">
    <property type="entry name" value="G-glutamylP_reductase_CS"/>
</dbReference>
<dbReference type="InterPro" id="IPR012134">
    <property type="entry name" value="Glu-5-SA_DH"/>
</dbReference>
<dbReference type="InterPro" id="IPR000965">
    <property type="entry name" value="GPR_dom"/>
</dbReference>
<dbReference type="NCBIfam" id="NF001221">
    <property type="entry name" value="PRK00197.1"/>
    <property type="match status" value="1"/>
</dbReference>
<dbReference type="NCBIfam" id="TIGR00407">
    <property type="entry name" value="proA"/>
    <property type="match status" value="1"/>
</dbReference>
<dbReference type="PANTHER" id="PTHR11063:SF8">
    <property type="entry name" value="DELTA-1-PYRROLINE-5-CARBOXYLATE SYNTHASE"/>
    <property type="match status" value="1"/>
</dbReference>
<dbReference type="PANTHER" id="PTHR11063">
    <property type="entry name" value="GLUTAMATE SEMIALDEHYDE DEHYDROGENASE"/>
    <property type="match status" value="1"/>
</dbReference>
<dbReference type="Pfam" id="PF00171">
    <property type="entry name" value="Aldedh"/>
    <property type="match status" value="1"/>
</dbReference>
<dbReference type="PIRSF" id="PIRSF000151">
    <property type="entry name" value="GPR"/>
    <property type="match status" value="1"/>
</dbReference>
<dbReference type="SUPFAM" id="SSF53720">
    <property type="entry name" value="ALDH-like"/>
    <property type="match status" value="1"/>
</dbReference>
<dbReference type="PROSITE" id="PS01223">
    <property type="entry name" value="PROA"/>
    <property type="match status" value="1"/>
</dbReference>
<sequence length="417" mass="45607">MLEQMGKQAKDAAFILAQLTTAEKNRALSIIAEQLEQQAPLILAENAKDIELAKQNELSDALIDRLLLTQERLQGIANDVRHVISLADPVGKIIDGGTLDSGLKIERVRTPLGVIGTIYEARPNVTIDVASLCLKTGNAVILRGGKETQFSNKILIEVVQNALEQAGLPKFAVQAITDPNRELVMQLLKLDRYVDMIIPRGGSDLHELCKQHSTIPVIVGGVGVCHTFVEESADQNKAIFVIDNAKTQRPSTCNTLETLLVQHSIAEEFLPKLVSHLSAKNVKYHAKSTALNILKQAGANVCEVTEKELRKEWGSLDLNVVVVEDIHAAIEHIRQYGTQHSESILTSSQNLARQFINQVDAAAVYVNASTRFTDGGQFGLGAEVAVSTQKLHARGPMGLEALTSYKWVCEGEYTVRK</sequence>
<proteinExistence type="inferred from homology"/>
<accession>A5UBQ2</accession>
<name>PROA_HAEIE</name>
<comment type="function">
    <text evidence="1">Catalyzes the NADPH-dependent reduction of L-glutamate 5-phosphate into L-glutamate 5-semialdehyde and phosphate. The product spontaneously undergoes cyclization to form 1-pyrroline-5-carboxylate.</text>
</comment>
<comment type="catalytic activity">
    <reaction evidence="1">
        <text>L-glutamate 5-semialdehyde + phosphate + NADP(+) = L-glutamyl 5-phosphate + NADPH + H(+)</text>
        <dbReference type="Rhea" id="RHEA:19541"/>
        <dbReference type="ChEBI" id="CHEBI:15378"/>
        <dbReference type="ChEBI" id="CHEBI:43474"/>
        <dbReference type="ChEBI" id="CHEBI:57783"/>
        <dbReference type="ChEBI" id="CHEBI:58066"/>
        <dbReference type="ChEBI" id="CHEBI:58274"/>
        <dbReference type="ChEBI" id="CHEBI:58349"/>
        <dbReference type="EC" id="1.2.1.41"/>
    </reaction>
</comment>
<comment type="pathway">
    <text evidence="1">Amino-acid biosynthesis; L-proline biosynthesis; L-glutamate 5-semialdehyde from L-glutamate: step 2/2.</text>
</comment>
<comment type="subcellular location">
    <subcellularLocation>
        <location evidence="1">Cytoplasm</location>
    </subcellularLocation>
</comment>
<comment type="similarity">
    <text evidence="1">Belongs to the gamma-glutamyl phosphate reductase family.</text>
</comment>
<protein>
    <recommendedName>
        <fullName evidence="1">Gamma-glutamyl phosphate reductase</fullName>
        <shortName evidence="1">GPR</shortName>
        <ecNumber evidence="1">1.2.1.41</ecNumber>
    </recommendedName>
    <alternativeName>
        <fullName evidence="1">Glutamate-5-semialdehyde dehydrogenase</fullName>
    </alternativeName>
    <alternativeName>
        <fullName evidence="1">Glutamyl-gamma-semialdehyde dehydrogenase</fullName>
        <shortName evidence="1">GSA dehydrogenase</shortName>
    </alternativeName>
</protein>
<reference key="1">
    <citation type="journal article" date="2007" name="Genome Biol.">
        <title>Characterization and modeling of the Haemophilus influenzae core and supragenomes based on the complete genomic sequences of Rd and 12 clinical nontypeable strains.</title>
        <authorList>
            <person name="Hogg J.S."/>
            <person name="Hu F.Z."/>
            <person name="Janto B."/>
            <person name="Boissy R."/>
            <person name="Hayes J."/>
            <person name="Keefe R."/>
            <person name="Post J.C."/>
            <person name="Ehrlich G.D."/>
        </authorList>
    </citation>
    <scope>NUCLEOTIDE SEQUENCE [LARGE SCALE GENOMIC DNA]</scope>
    <source>
        <strain>PittEE</strain>
    </source>
</reference>
<evidence type="ECO:0000255" key="1">
    <source>
        <dbReference type="HAMAP-Rule" id="MF_00412"/>
    </source>
</evidence>